<gene>
    <name evidence="2" type="primary">otsA</name>
    <name type="ordered locus">Mflv_1566</name>
</gene>
<keyword id="KW-0328">Glycosyltransferase</keyword>
<keyword id="KW-0808">Transferase</keyword>
<name>OTSA_MYCGI</name>
<accession>A4T7Q6</accession>
<dbReference type="EC" id="2.4.1.15" evidence="2"/>
<dbReference type="EC" id="2.4.1.347" evidence="2"/>
<dbReference type="EMBL" id="CP000656">
    <property type="protein sequence ID" value="ABP44048.1"/>
    <property type="molecule type" value="Genomic_DNA"/>
</dbReference>
<dbReference type="SMR" id="A4T7Q6"/>
<dbReference type="STRING" id="350054.Mflv_1566"/>
<dbReference type="CAZy" id="GT20">
    <property type="family name" value="Glycosyltransferase Family 20"/>
</dbReference>
<dbReference type="KEGG" id="mgi:Mflv_1566"/>
<dbReference type="eggNOG" id="COG0380">
    <property type="taxonomic scope" value="Bacteria"/>
</dbReference>
<dbReference type="HOGENOM" id="CLU_002351_7_1_11"/>
<dbReference type="OrthoDB" id="9761633at2"/>
<dbReference type="UniPathway" id="UPA00299"/>
<dbReference type="GO" id="GO:0005829">
    <property type="term" value="C:cytosol"/>
    <property type="evidence" value="ECO:0007669"/>
    <property type="project" value="TreeGrafter"/>
</dbReference>
<dbReference type="GO" id="GO:0047260">
    <property type="term" value="F:alpha,alpha-trehalose-phosphate synthase (GDP-forming) activity"/>
    <property type="evidence" value="ECO:0007669"/>
    <property type="project" value="RHEA"/>
</dbReference>
<dbReference type="GO" id="GO:0003825">
    <property type="term" value="F:alpha,alpha-trehalose-phosphate synthase (UDP-forming) activity"/>
    <property type="evidence" value="ECO:0007669"/>
    <property type="project" value="UniProtKB-EC"/>
</dbReference>
<dbReference type="GO" id="GO:0004805">
    <property type="term" value="F:trehalose-phosphatase activity"/>
    <property type="evidence" value="ECO:0007669"/>
    <property type="project" value="TreeGrafter"/>
</dbReference>
<dbReference type="GO" id="GO:0005992">
    <property type="term" value="P:trehalose biosynthetic process"/>
    <property type="evidence" value="ECO:0007669"/>
    <property type="project" value="UniProtKB-UniPathway"/>
</dbReference>
<dbReference type="CDD" id="cd03788">
    <property type="entry name" value="GT20_TPS"/>
    <property type="match status" value="1"/>
</dbReference>
<dbReference type="Gene3D" id="3.40.50.2000">
    <property type="entry name" value="Glycogen Phosphorylase B"/>
    <property type="match status" value="2"/>
</dbReference>
<dbReference type="InterPro" id="IPR001830">
    <property type="entry name" value="Glyco_trans_20"/>
</dbReference>
<dbReference type="PANTHER" id="PTHR10788:SF106">
    <property type="entry name" value="BCDNA.GH08860"/>
    <property type="match status" value="1"/>
</dbReference>
<dbReference type="PANTHER" id="PTHR10788">
    <property type="entry name" value="TREHALOSE-6-PHOSPHATE SYNTHASE"/>
    <property type="match status" value="1"/>
</dbReference>
<dbReference type="Pfam" id="PF00982">
    <property type="entry name" value="Glyco_transf_20"/>
    <property type="match status" value="1"/>
</dbReference>
<dbReference type="SUPFAM" id="SSF53756">
    <property type="entry name" value="UDP-Glycosyltransferase/glycogen phosphorylase"/>
    <property type="match status" value="1"/>
</dbReference>
<organism>
    <name type="scientific">Mycolicibacterium gilvum (strain PYR-GCK)</name>
    <name type="common">Mycobacterium gilvum (strain PYR-GCK)</name>
    <dbReference type="NCBI Taxonomy" id="350054"/>
    <lineage>
        <taxon>Bacteria</taxon>
        <taxon>Bacillati</taxon>
        <taxon>Actinomycetota</taxon>
        <taxon>Actinomycetes</taxon>
        <taxon>Mycobacteriales</taxon>
        <taxon>Mycobacteriaceae</taxon>
        <taxon>Mycolicibacterium</taxon>
    </lineage>
</organism>
<proteinExistence type="inferred from homology"/>
<evidence type="ECO:0000250" key="1">
    <source>
        <dbReference type="UniProtKB" id="P31677"/>
    </source>
</evidence>
<evidence type="ECO:0000250" key="2">
    <source>
        <dbReference type="UniProtKB" id="P9WN11"/>
    </source>
</evidence>
<evidence type="ECO:0000256" key="3">
    <source>
        <dbReference type="SAM" id="MobiDB-lite"/>
    </source>
</evidence>
<reference key="1">
    <citation type="submission" date="2007-04" db="EMBL/GenBank/DDBJ databases">
        <title>Complete sequence of chromosome of Mycobacterium gilvum PYR-GCK.</title>
        <authorList>
            <consortium name="US DOE Joint Genome Institute"/>
            <person name="Copeland A."/>
            <person name="Lucas S."/>
            <person name="Lapidus A."/>
            <person name="Barry K."/>
            <person name="Detter J.C."/>
            <person name="Glavina del Rio T."/>
            <person name="Hammon N."/>
            <person name="Israni S."/>
            <person name="Dalin E."/>
            <person name="Tice H."/>
            <person name="Pitluck S."/>
            <person name="Chain P."/>
            <person name="Malfatti S."/>
            <person name="Shin M."/>
            <person name="Vergez L."/>
            <person name="Schmutz J."/>
            <person name="Larimer F."/>
            <person name="Land M."/>
            <person name="Hauser L."/>
            <person name="Kyrpides N."/>
            <person name="Mikhailova N."/>
            <person name="Miller C."/>
            <person name="Richardson P."/>
        </authorList>
    </citation>
    <scope>NUCLEOTIDE SEQUENCE [LARGE SCALE GENOMIC DNA]</scope>
    <source>
        <strain>PYR-GCK</strain>
    </source>
</reference>
<comment type="function">
    <text evidence="2">Probably involved in the osmoprotection via the biosynthesis of trehalose and in the production of glycogen and alpha-glucan via the TreS-Pep2 branch involved in the biosynthesis of maltose-1-phosphate (M1P). Catalyzes the transfer of glucose from UDP-glucose (UDP-Glc) to D-glucose 6-phosphate (Glc-6-P) to form trehalose-6-phosphate. Probably also able to use ADP-Glc, CDP-Glc, GDP-Glc and TDP-Glc as glucosyl donors.</text>
</comment>
<comment type="catalytic activity">
    <reaction evidence="2">
        <text>ADP-alpha-D-glucose + D-glucose 6-phosphate = alpha,alpha-trehalose 6-phosphate + ADP + H(+)</text>
        <dbReference type="Rhea" id="RHEA:53880"/>
        <dbReference type="ChEBI" id="CHEBI:15378"/>
        <dbReference type="ChEBI" id="CHEBI:57498"/>
        <dbReference type="ChEBI" id="CHEBI:58429"/>
        <dbReference type="ChEBI" id="CHEBI:61548"/>
        <dbReference type="ChEBI" id="CHEBI:456216"/>
        <dbReference type="EC" id="2.4.1.347"/>
    </reaction>
</comment>
<comment type="catalytic activity">
    <reaction evidence="2">
        <text>CDP-alpha-D-glucose + D-glucose 6-phosphate = alpha,alpha-trehalose 6-phosphate + CDP + H(+)</text>
        <dbReference type="Rhea" id="RHEA:53884"/>
        <dbReference type="ChEBI" id="CHEBI:15378"/>
        <dbReference type="ChEBI" id="CHEBI:58069"/>
        <dbReference type="ChEBI" id="CHEBI:58429"/>
        <dbReference type="ChEBI" id="CHEBI:61548"/>
        <dbReference type="ChEBI" id="CHEBI:137927"/>
    </reaction>
</comment>
<comment type="catalytic activity">
    <reaction evidence="2">
        <text>GDP-alpha-D-glucose + D-glucose 6-phosphate = alpha,alpha-trehalose 6-phosphate + GDP + H(+)</text>
        <dbReference type="Rhea" id="RHEA:14605"/>
        <dbReference type="ChEBI" id="CHEBI:15378"/>
        <dbReference type="ChEBI" id="CHEBI:58189"/>
        <dbReference type="ChEBI" id="CHEBI:58429"/>
        <dbReference type="ChEBI" id="CHEBI:61548"/>
        <dbReference type="ChEBI" id="CHEBI:62230"/>
    </reaction>
</comment>
<comment type="catalytic activity">
    <reaction evidence="2">
        <text>TDP-alpha-D-glucose + D-glucose 6-phosphate = 5-methyl-UDP + alpha,alpha-trehalose 6-phosphate + H(+)</text>
        <dbReference type="Rhea" id="RHEA:53888"/>
        <dbReference type="ChEBI" id="CHEBI:15378"/>
        <dbReference type="ChEBI" id="CHEBI:58429"/>
        <dbReference type="ChEBI" id="CHEBI:61417"/>
        <dbReference type="ChEBI" id="CHEBI:61548"/>
        <dbReference type="ChEBI" id="CHEBI:137931"/>
    </reaction>
</comment>
<comment type="catalytic activity">
    <reaction evidence="2">
        <text>D-glucose 6-phosphate + UDP-alpha-D-glucose = alpha,alpha-trehalose 6-phosphate + UDP + H(+)</text>
        <dbReference type="Rhea" id="RHEA:18889"/>
        <dbReference type="ChEBI" id="CHEBI:15378"/>
        <dbReference type="ChEBI" id="CHEBI:58223"/>
        <dbReference type="ChEBI" id="CHEBI:58429"/>
        <dbReference type="ChEBI" id="CHEBI:58885"/>
        <dbReference type="ChEBI" id="CHEBI:61548"/>
        <dbReference type="EC" id="2.4.1.15"/>
    </reaction>
</comment>
<comment type="pathway">
    <text evidence="2">Glycan biosynthesis; trehalose biosynthesis.</text>
</comment>
<comment type="subunit">
    <text evidence="2">Homotetramer.</text>
</comment>
<comment type="similarity">
    <text evidence="2">Belongs to the glycosyltransferase 20 family.</text>
</comment>
<protein>
    <recommendedName>
        <fullName evidence="2">Trehalose-6-phosphate synthase</fullName>
        <shortName evidence="2">TPS</shortName>
        <ecNumber evidence="2">2.4.1.15</ecNumber>
        <ecNumber evidence="2">2.4.1.347</ecNumber>
    </recommendedName>
    <alternativeName>
        <fullName evidence="2">Alpha,alpha-trehalose-phosphate synthase [UDP-forming]</fullName>
    </alternativeName>
    <alternativeName>
        <fullName evidence="1">Osmoregulatory trehalose synthesis protein A</fullName>
        <shortName evidence="1">OtsA</shortName>
    </alternativeName>
</protein>
<sequence length="503" mass="56374">MTDQSGNGVRSGSASEAPPSAKADFVVVANRLPIDQVNLPDGSTEWKRSPGGLVTALEPLLRRRHGAWIGWPGVPEDADDPDASTEPIEQDGMTLVPVRLSAADVAKYYEGFSNATLWPLYHDVIVKPTYHREWWERYVEVNRRFAEAAARTAAEGATVWVQDYQLQLVPKMLRMLRPDLTIGFFLHIPFPPVELFLQMPWRTEIIEGLLGADLVGFHLPGGAQNFLILARRLLGAVTSRGNVGVRSRFGEVQFGFRKVKVGAFPISIDSAELDQHARTRATRQRAKEIRAELGNPRKVLLGVDRLDYTKGIDVRLRAFSELLEEGRIDPEDTVLVQLATPSRERVQSYIEMREDIERQVGHVNGEFGKVGHPVLHYLHRPIPREDLVAFFVAADVMLVTPLRDGMNLVAKEYVACRHDLGGALVLSEFTGAAAELRQAYLTNPHHLEGVKDAIEAALNQSPEEGRRRMRALRRQVLAHDVDRWARSFLDALASREPINEESH</sequence>
<feature type="chain" id="PRO_0000348906" description="Trehalose-6-phosphate synthase">
    <location>
        <begin position="1"/>
        <end position="503"/>
    </location>
</feature>
<feature type="region of interest" description="Disordered" evidence="3">
    <location>
        <begin position="1"/>
        <end position="20"/>
    </location>
</feature>
<feature type="compositionally biased region" description="Polar residues" evidence="3">
    <location>
        <begin position="1"/>
        <end position="14"/>
    </location>
</feature>
<feature type="binding site" evidence="1">
    <location>
        <position position="31"/>
    </location>
    <ligand>
        <name>D-glucose 6-phosphate</name>
        <dbReference type="ChEBI" id="CHEBI:61548"/>
    </ligand>
</feature>
<feature type="binding site" evidence="1">
    <location>
        <begin position="51"/>
        <end position="52"/>
    </location>
    <ligand>
        <name>UDP-alpha-D-glucose</name>
        <dbReference type="ChEBI" id="CHEBI:58885"/>
    </ligand>
</feature>
<feature type="binding site" evidence="1">
    <location>
        <position position="109"/>
    </location>
    <ligand>
        <name>D-glucose 6-phosphate</name>
        <dbReference type="ChEBI" id="CHEBI:61548"/>
    </ligand>
</feature>
<feature type="binding site" evidence="1">
    <location>
        <position position="163"/>
    </location>
    <ligand>
        <name>D-glucose 6-phosphate</name>
        <dbReference type="ChEBI" id="CHEBI:61548"/>
    </ligand>
</feature>
<feature type="binding site" evidence="1">
    <location>
        <position position="305"/>
    </location>
    <ligand>
        <name>UDP-alpha-D-glucose</name>
        <dbReference type="ChEBI" id="CHEBI:58885"/>
    </ligand>
</feature>
<feature type="binding site" evidence="1">
    <location>
        <position position="310"/>
    </location>
    <ligand>
        <name>UDP-alpha-D-glucose</name>
        <dbReference type="ChEBI" id="CHEBI:58885"/>
    </ligand>
</feature>
<feature type="binding site" evidence="1">
    <location>
        <position position="343"/>
    </location>
    <ligand>
        <name>D-glucose 6-phosphate</name>
        <dbReference type="ChEBI" id="CHEBI:61548"/>
    </ligand>
</feature>
<feature type="binding site" evidence="1">
    <location>
        <begin position="408"/>
        <end position="412"/>
    </location>
    <ligand>
        <name>UDP-alpha-D-glucose</name>
        <dbReference type="ChEBI" id="CHEBI:58885"/>
    </ligand>
</feature>
<feature type="site" description="Involved in alpha anomer selectivity" evidence="1">
    <location>
        <position position="118"/>
    </location>
</feature>
<feature type="site" description="Involved in alpha anomer selectivity" evidence="1">
    <location>
        <position position="188"/>
    </location>
</feature>